<feature type="transit peptide" description="Mitochondrion" evidence="2">
    <location>
        <begin position="1"/>
        <end position="31"/>
    </location>
</feature>
<feature type="chain" id="PRO_0000418635" description="Bifunctional L-3-cyanoalanine synthase/cysteine synthase C1, mitochondrial">
    <location>
        <begin position="32"/>
        <end position="368"/>
    </location>
</feature>
<feature type="binding site" evidence="1">
    <location>
        <position position="121"/>
    </location>
    <ligand>
        <name>pyridoxal 5'-phosphate</name>
        <dbReference type="ChEBI" id="CHEBI:597326"/>
    </ligand>
</feature>
<feature type="binding site" evidence="1">
    <location>
        <begin position="225"/>
        <end position="229"/>
    </location>
    <ligand>
        <name>pyridoxal 5'-phosphate</name>
        <dbReference type="ChEBI" id="CHEBI:597326"/>
    </ligand>
</feature>
<feature type="binding site" evidence="1">
    <location>
        <position position="313"/>
    </location>
    <ligand>
        <name>pyridoxal 5'-phosphate</name>
        <dbReference type="ChEBI" id="CHEBI:597326"/>
    </ligand>
</feature>
<feature type="modified residue" description="N6-(pyridoxal phosphate)lysine" evidence="1">
    <location>
        <position position="90"/>
    </location>
</feature>
<feature type="splice variant" id="VSP_044069" description="In isoform 3." evidence="8">
    <location>
        <begin position="1"/>
        <end position="121"/>
    </location>
</feature>
<feature type="splice variant" id="VSP_044070" description="In isoform 2." evidence="8">
    <location>
        <begin position="1"/>
        <end position="96"/>
    </location>
</feature>
<reference key="1">
    <citation type="journal article" date="2000" name="Plant Cell Physiol.">
        <title>Three Arabidopsis genes encoding proteins with differential activities for cysteine synthase and beta-cyanoalanine synthase.</title>
        <authorList>
            <person name="Yamaguchi Y."/>
            <person name="Nakamura T."/>
            <person name="Kusano T."/>
            <person name="Sano H."/>
        </authorList>
    </citation>
    <scope>NUCLEOTIDE SEQUENCE [MRNA] (ISOFORM 1)</scope>
    <scope>CATALYTIC ACTIVITY</scope>
    <scope>BIOPHYSICOCHEMICAL PROPERTIES</scope>
    <scope>TISSUE SPECIFICITY</scope>
    <scope>SUBCELLULAR LOCATION</scope>
</reference>
<reference key="2">
    <citation type="journal article" date="2000" name="Plant Physiol.">
        <title>beta-Cyanoalanine synthase is a mitochondrial cysteine synthase-like protein in spinach and Arabidopsis.</title>
        <authorList>
            <person name="Hatzfeld Y."/>
            <person name="Maruyama A."/>
            <person name="Schmidt A."/>
            <person name="Noji M."/>
            <person name="Ishizawa K."/>
            <person name="Saito K."/>
        </authorList>
    </citation>
    <scope>NUCLEOTIDE SEQUENCE [MRNA]</scope>
    <scope>NOMENCLATURE</scope>
    <scope>FUNCTION</scope>
    <scope>CATALYTIC ACTIVITY</scope>
    <scope>BIOPHYSICOCHEMICAL PROPERTIES</scope>
</reference>
<reference key="3">
    <citation type="journal article" date="2000" name="Nature">
        <title>Sequence and analysis of chromosome 3 of the plant Arabidopsis thaliana.</title>
        <authorList>
            <person name="Salanoubat M."/>
            <person name="Lemcke K."/>
            <person name="Rieger M."/>
            <person name="Ansorge W."/>
            <person name="Unseld M."/>
            <person name="Fartmann B."/>
            <person name="Valle G."/>
            <person name="Bloecker H."/>
            <person name="Perez-Alonso M."/>
            <person name="Obermaier B."/>
            <person name="Delseny M."/>
            <person name="Boutry M."/>
            <person name="Grivell L.A."/>
            <person name="Mache R."/>
            <person name="Puigdomenech P."/>
            <person name="De Simone V."/>
            <person name="Choisne N."/>
            <person name="Artiguenave F."/>
            <person name="Robert C."/>
            <person name="Brottier P."/>
            <person name="Wincker P."/>
            <person name="Cattolico L."/>
            <person name="Weissenbach J."/>
            <person name="Saurin W."/>
            <person name="Quetier F."/>
            <person name="Schaefer M."/>
            <person name="Mueller-Auer S."/>
            <person name="Gabel C."/>
            <person name="Fuchs M."/>
            <person name="Benes V."/>
            <person name="Wurmbach E."/>
            <person name="Drzonek H."/>
            <person name="Erfle H."/>
            <person name="Jordan N."/>
            <person name="Bangert S."/>
            <person name="Wiedelmann R."/>
            <person name="Kranz H."/>
            <person name="Voss H."/>
            <person name="Holland R."/>
            <person name="Brandt P."/>
            <person name="Nyakatura G."/>
            <person name="Vezzi A."/>
            <person name="D'Angelo M."/>
            <person name="Pallavicini A."/>
            <person name="Toppo S."/>
            <person name="Simionati B."/>
            <person name="Conrad A."/>
            <person name="Hornischer K."/>
            <person name="Kauer G."/>
            <person name="Loehnert T.-H."/>
            <person name="Nordsiek G."/>
            <person name="Reichelt J."/>
            <person name="Scharfe M."/>
            <person name="Schoen O."/>
            <person name="Bargues M."/>
            <person name="Terol J."/>
            <person name="Climent J."/>
            <person name="Navarro P."/>
            <person name="Collado C."/>
            <person name="Perez-Perez A."/>
            <person name="Ottenwaelder B."/>
            <person name="Duchemin D."/>
            <person name="Cooke R."/>
            <person name="Laudie M."/>
            <person name="Berger-Llauro C."/>
            <person name="Purnelle B."/>
            <person name="Masuy D."/>
            <person name="de Haan M."/>
            <person name="Maarse A.C."/>
            <person name="Alcaraz J.-P."/>
            <person name="Cottet A."/>
            <person name="Casacuberta E."/>
            <person name="Monfort A."/>
            <person name="Argiriou A."/>
            <person name="Flores M."/>
            <person name="Liguori R."/>
            <person name="Vitale D."/>
            <person name="Mannhaupt G."/>
            <person name="Haase D."/>
            <person name="Schoof H."/>
            <person name="Rudd S."/>
            <person name="Zaccaria P."/>
            <person name="Mewes H.-W."/>
            <person name="Mayer K.F.X."/>
            <person name="Kaul S."/>
            <person name="Town C.D."/>
            <person name="Koo H.L."/>
            <person name="Tallon L.J."/>
            <person name="Jenkins J."/>
            <person name="Rooney T."/>
            <person name="Rizzo M."/>
            <person name="Walts A."/>
            <person name="Utterback T."/>
            <person name="Fujii C.Y."/>
            <person name="Shea T.P."/>
            <person name="Creasy T.H."/>
            <person name="Haas B."/>
            <person name="Maiti R."/>
            <person name="Wu D."/>
            <person name="Peterson J."/>
            <person name="Van Aken S."/>
            <person name="Pai G."/>
            <person name="Militscher J."/>
            <person name="Sellers P."/>
            <person name="Gill J.E."/>
            <person name="Feldblyum T.V."/>
            <person name="Preuss D."/>
            <person name="Lin X."/>
            <person name="Nierman W.C."/>
            <person name="Salzberg S.L."/>
            <person name="White O."/>
            <person name="Venter J.C."/>
            <person name="Fraser C.M."/>
            <person name="Kaneko T."/>
            <person name="Nakamura Y."/>
            <person name="Sato S."/>
            <person name="Kato T."/>
            <person name="Asamizu E."/>
            <person name="Sasamoto S."/>
            <person name="Kimura T."/>
            <person name="Idesawa K."/>
            <person name="Kawashima K."/>
            <person name="Kishida Y."/>
            <person name="Kiyokawa C."/>
            <person name="Kohara M."/>
            <person name="Matsumoto M."/>
            <person name="Matsuno A."/>
            <person name="Muraki A."/>
            <person name="Nakayama S."/>
            <person name="Nakazaki N."/>
            <person name="Shinpo S."/>
            <person name="Takeuchi C."/>
            <person name="Wada T."/>
            <person name="Watanabe A."/>
            <person name="Yamada M."/>
            <person name="Yasuda M."/>
            <person name="Tabata S."/>
        </authorList>
    </citation>
    <scope>NUCLEOTIDE SEQUENCE [LARGE SCALE GENOMIC DNA]</scope>
    <source>
        <strain>cv. Columbia</strain>
    </source>
</reference>
<reference key="4">
    <citation type="journal article" date="2017" name="Plant J.">
        <title>Araport11: a complete reannotation of the Arabidopsis thaliana reference genome.</title>
        <authorList>
            <person name="Cheng C.Y."/>
            <person name="Krishnakumar V."/>
            <person name="Chan A.P."/>
            <person name="Thibaud-Nissen F."/>
            <person name="Schobel S."/>
            <person name="Town C.D."/>
        </authorList>
    </citation>
    <scope>GENOME REANNOTATION</scope>
    <source>
        <strain>cv. Columbia</strain>
    </source>
</reference>
<reference key="5">
    <citation type="journal article" date="2003" name="Science">
        <title>Empirical analysis of transcriptional activity in the Arabidopsis genome.</title>
        <authorList>
            <person name="Yamada K."/>
            <person name="Lim J."/>
            <person name="Dale J.M."/>
            <person name="Chen H."/>
            <person name="Shinn P."/>
            <person name="Palm C.J."/>
            <person name="Southwick A.M."/>
            <person name="Wu H.C."/>
            <person name="Kim C.J."/>
            <person name="Nguyen M."/>
            <person name="Pham P.K."/>
            <person name="Cheuk R.F."/>
            <person name="Karlin-Newmann G."/>
            <person name="Liu S.X."/>
            <person name="Lam B."/>
            <person name="Sakano H."/>
            <person name="Wu T."/>
            <person name="Yu G."/>
            <person name="Miranda M."/>
            <person name="Quach H.L."/>
            <person name="Tripp M."/>
            <person name="Chang C.H."/>
            <person name="Lee J.M."/>
            <person name="Toriumi M.J."/>
            <person name="Chan M.M."/>
            <person name="Tang C.C."/>
            <person name="Onodera C.S."/>
            <person name="Deng J.M."/>
            <person name="Akiyama K."/>
            <person name="Ansari Y."/>
            <person name="Arakawa T."/>
            <person name="Banh J."/>
            <person name="Banno F."/>
            <person name="Bowser L."/>
            <person name="Brooks S.Y."/>
            <person name="Carninci P."/>
            <person name="Chao Q."/>
            <person name="Choy N."/>
            <person name="Enju A."/>
            <person name="Goldsmith A.D."/>
            <person name="Gurjal M."/>
            <person name="Hansen N.F."/>
            <person name="Hayashizaki Y."/>
            <person name="Johnson-Hopson C."/>
            <person name="Hsuan V.W."/>
            <person name="Iida K."/>
            <person name="Karnes M."/>
            <person name="Khan S."/>
            <person name="Koesema E."/>
            <person name="Ishida J."/>
            <person name="Jiang P.X."/>
            <person name="Jones T."/>
            <person name="Kawai J."/>
            <person name="Kamiya A."/>
            <person name="Meyers C."/>
            <person name="Nakajima M."/>
            <person name="Narusaka M."/>
            <person name="Seki M."/>
            <person name="Sakurai T."/>
            <person name="Satou M."/>
            <person name="Tamse R."/>
            <person name="Vaysberg M."/>
            <person name="Wallender E.K."/>
            <person name="Wong C."/>
            <person name="Yamamura Y."/>
            <person name="Yuan S."/>
            <person name="Shinozaki K."/>
            <person name="Davis R.W."/>
            <person name="Theologis A."/>
            <person name="Ecker J.R."/>
        </authorList>
    </citation>
    <scope>NUCLEOTIDE SEQUENCE [LARGE SCALE MRNA]</scope>
    <source>
        <strain>cv. Columbia</strain>
    </source>
</reference>
<reference key="6">
    <citation type="submission" date="2006-07" db="EMBL/GenBank/DDBJ databases">
        <title>Large-scale analysis of RIKEN Arabidopsis full-length (RAFL) cDNAs.</title>
        <authorList>
            <person name="Totoki Y."/>
            <person name="Seki M."/>
            <person name="Ishida J."/>
            <person name="Nakajima M."/>
            <person name="Enju A."/>
            <person name="Kamiya A."/>
            <person name="Narusaka M."/>
            <person name="Shin-i T."/>
            <person name="Nakagawa M."/>
            <person name="Sakamoto N."/>
            <person name="Oishi K."/>
            <person name="Kohara Y."/>
            <person name="Kobayashi M."/>
            <person name="Toyoda A."/>
            <person name="Sakaki Y."/>
            <person name="Sakurai T."/>
            <person name="Iida K."/>
            <person name="Akiyama K."/>
            <person name="Satou M."/>
            <person name="Toyoda T."/>
            <person name="Konagaya A."/>
            <person name="Carninci P."/>
            <person name="Kawai J."/>
            <person name="Hayashizaki Y."/>
            <person name="Shinozaki K."/>
        </authorList>
    </citation>
    <scope>NUCLEOTIDE SEQUENCE [LARGE SCALE MRNA]</scope>
    <source>
        <strain>cv. Columbia</strain>
    </source>
</reference>
<reference key="7">
    <citation type="submission" date="2002-03" db="EMBL/GenBank/DDBJ databases">
        <title>Full-length cDNA from Arabidopsis thaliana.</title>
        <authorList>
            <person name="Brover V.V."/>
            <person name="Troukhan M.E."/>
            <person name="Alexandrov N.A."/>
            <person name="Lu Y.-P."/>
            <person name="Flavell R.B."/>
            <person name="Feldmann K.A."/>
        </authorList>
    </citation>
    <scope>NUCLEOTIDE SEQUENCE [LARGE SCALE MRNA]</scope>
</reference>
<reference key="8">
    <citation type="journal article" date="2005" name="Photosyn. Res.">
        <title>Synthesis of the sulfur amino acids: cysteine and methionine.</title>
        <authorList>
            <person name="Wirtz M."/>
            <person name="Droux M."/>
        </authorList>
    </citation>
    <scope>REVIEW</scope>
</reference>
<reference key="9">
    <citation type="journal article" date="2008" name="Plant Cell">
        <title>Analysis of the Arabidopsis O-acetylserine(thiol)lyase gene family demonstrates compartment-specific differences in the regulation of cysteine synthesis.</title>
        <authorList>
            <person name="Heeg C."/>
            <person name="Kruse C."/>
            <person name="Jost R."/>
            <person name="Gutensohn M."/>
            <person name="Ruppert T."/>
            <person name="Wirtz M."/>
            <person name="Hell R."/>
        </authorList>
    </citation>
    <scope>FUNCTION</scope>
</reference>
<reference key="10">
    <citation type="journal article" date="2008" name="Plant Physiol.">
        <title>Physiological roles of the beta-substituted alanine synthase gene family in Arabidopsis.</title>
        <authorList>
            <person name="Watanabe M."/>
            <person name="Kusano M."/>
            <person name="Oikawa A."/>
            <person name="Fukushima A."/>
            <person name="Noji M."/>
            <person name="Saito K."/>
        </authorList>
    </citation>
    <scope>GENE FAMILY</scope>
    <scope>FUNCTION</scope>
    <scope>TISSUE SPECIFICITY</scope>
    <scope>DISRUPTION PHENOTYPE</scope>
</reference>
<reference key="11">
    <citation type="journal article" date="2010" name="Plant Cell">
        <title>Mitochondrial beta-cyanoalanine synthase is essential for root hair formation in Arabidopsis thaliana.</title>
        <authorList>
            <person name="Garcia I."/>
            <person name="Castellano J.M."/>
            <person name="Vioque B."/>
            <person name="Solano R."/>
            <person name="Gotor C."/>
            <person name="Romero L.C."/>
        </authorList>
    </citation>
    <scope>FUNCTION</scope>
    <scope>DISRUPTION PHENOTYPE</scope>
</reference>
<keyword id="KW-0025">Alternative splicing</keyword>
<keyword id="KW-0028">Amino-acid biosynthesis</keyword>
<keyword id="KW-0198">Cysteine biosynthesis</keyword>
<keyword id="KW-0456">Lyase</keyword>
<keyword id="KW-0496">Mitochondrion</keyword>
<keyword id="KW-0663">Pyridoxal phosphate</keyword>
<keyword id="KW-1185">Reference proteome</keyword>
<keyword id="KW-0808">Transferase</keyword>
<keyword id="KW-0809">Transit peptide</keyword>
<accession>Q9S757</accession>
<accession>F4JEA0</accession>
<accession>F4JEA1</accession>
<evidence type="ECO:0000250" key="1"/>
<evidence type="ECO:0000255" key="2"/>
<evidence type="ECO:0000269" key="3">
    <source>
    </source>
</evidence>
<evidence type="ECO:0000269" key="4">
    <source>
    </source>
</evidence>
<evidence type="ECO:0000269" key="5">
    <source>
    </source>
</evidence>
<evidence type="ECO:0000269" key="6">
    <source>
    </source>
</evidence>
<evidence type="ECO:0000269" key="7">
    <source>
    </source>
</evidence>
<evidence type="ECO:0000305" key="8"/>
<comment type="function">
    <text evidence="4 5 6 7">Acts as a major beta-cyanoalanine synthase. The cyanoalanine synthesis reaction is more efficient than the cysteine synthase activity. Probably unable to interact with SAT and to form the decameric Cys synthase complex (CSC) and is therefore not an enzymatically true OASTL protein. Probably involved in the detoxification of cyanide that arises from ethylene biosynthesis. Maintains a low level of cyanide for proper root hair development.</text>
</comment>
<comment type="catalytic activity">
    <reaction evidence="3 4">
        <text>O-acetyl-L-serine + hydrogen sulfide = L-cysteine + acetate</text>
        <dbReference type="Rhea" id="RHEA:14829"/>
        <dbReference type="ChEBI" id="CHEBI:29919"/>
        <dbReference type="ChEBI" id="CHEBI:30089"/>
        <dbReference type="ChEBI" id="CHEBI:35235"/>
        <dbReference type="ChEBI" id="CHEBI:58340"/>
        <dbReference type="EC" id="2.5.1.47"/>
    </reaction>
</comment>
<comment type="catalytic activity">
    <reaction evidence="3 4">
        <text>hydrogen cyanide + L-cysteine = 3-cyano-L-alanine + hydrogen sulfide + H(+)</text>
        <dbReference type="Rhea" id="RHEA:17821"/>
        <dbReference type="ChEBI" id="CHEBI:15378"/>
        <dbReference type="ChEBI" id="CHEBI:18407"/>
        <dbReference type="ChEBI" id="CHEBI:29919"/>
        <dbReference type="ChEBI" id="CHEBI:35235"/>
        <dbReference type="ChEBI" id="CHEBI:77860"/>
        <dbReference type="EC" id="4.4.1.9"/>
    </reaction>
</comment>
<comment type="cofactor">
    <cofactor evidence="8">
        <name>pyridoxal 5'-phosphate</name>
        <dbReference type="ChEBI" id="CHEBI:597326"/>
    </cofactor>
</comment>
<comment type="biophysicochemical properties">
    <kinetics>
        <KM evidence="3 4">39.88 mM for O(3)-acetyl-L-serine for the cysteine synthase activity</KM>
        <KM evidence="3 4">8.03 mM for O(3)-acetyl-L-serine for the cysteine synthase activity</KM>
        <KM evidence="3 4">8.24 mM for Na(2)S for the cysteine synthase activity</KM>
        <KM evidence="3 4">0.04 mM for Na(2)S for the cysteine synthase activity</KM>
        <KM evidence="3 4">2.54 mM for L-cysteine for the L-3-cyanoalanine synthase activity</KM>
        <KM evidence="3 4">0.14 mM for L-cysteine for the L-3-cyanoalanine synthase activity</KM>
        <KM evidence="3 4">0.06 mM for KCN for the L-3-cyanoalanine synthase activity</KM>
        <KM evidence="3 4">0.02 mM for KCN for the L-3-cyanoalanine synthase activity</KM>
        <Vmax evidence="3 4">0.4 umol/min/mg enzyme for L-cysteine for the cysteine synthase activity</Vmax>
        <Vmax evidence="3 4">62.1 umol/min/mg enzyme for H(2)S for the L-3-cyanoalanine synthase activity</Vmax>
        <text>kcat is 120 min(-1) for O(3)-acetyl-L-serine for the cysteine synthase activity, kcat is 90 min(-1) for Na(2)S for the cysteine synthase activity, kcat is 160 min(-1) for cysteine for the L-3-cyanoalanine synthase activity, kcat is 130 min(-1) for KCN for the L-3-cyanoalanine synthase activity.</text>
    </kinetics>
</comment>
<comment type="subcellular location">
    <subcellularLocation>
        <location evidence="3">Mitochondrion</location>
    </subcellularLocation>
</comment>
<comment type="alternative products">
    <event type="alternative splicing"/>
    <isoform>
        <id>Q9S757-1</id>
        <name>1</name>
        <sequence type="displayed"/>
    </isoform>
    <isoform>
        <id>Q9S757-2</id>
        <name>2</name>
        <sequence type="described" ref="VSP_044070"/>
    </isoform>
    <isoform>
        <id>Q9S757-3</id>
        <name>3</name>
        <sequence type="described" ref="VSP_044069"/>
    </isoform>
</comment>
<comment type="tissue specificity">
    <text evidence="3 5">Mainly expressed in mature rosette leaves. Also detected in roots, young rosette leaves, stems, cauline leaves, and flowers.</text>
</comment>
<comment type="disruption phenotype">
    <text evidence="5 7">Defective in root hair formation and accumulates cyanide in root tissues. No effects on growth.</text>
</comment>
<comment type="similarity">
    <text evidence="8">Belongs to the cysteine synthase/cystathionine beta-synthase family.</text>
</comment>
<name>CYSC1_ARATH</name>
<protein>
    <recommendedName>
        <fullName>Bifunctional L-3-cyanoalanine synthase/cysteine synthase C1, mitochondrial</fullName>
        <ecNumber evidence="3 4">2.5.1.47</ecNumber>
        <ecNumber evidence="3 4">4.4.1.9</ecNumber>
    </recommendedName>
    <alternativeName>
        <fullName>Beta-substituted Ala synthase 3;1</fullName>
        <shortName>ARAth-Bsas3;1</shortName>
    </alternativeName>
    <alternativeName>
        <fullName>Cysteine synthase C1</fullName>
        <shortName>AtCYSC1</shortName>
    </alternativeName>
    <alternativeName>
        <fullName>O-acetylserine (thiol)-lyase 5</fullName>
    </alternativeName>
</protein>
<sequence length="368" mass="39927">MASVSRRLLRRETIPCFSHTVRKLFSTVGSPSFAQRLRDLPKDFPSTNAKRDASLLIGKTPLVFLNKVTEGCEAYVAAKQEHFQPTCSIKDRPAIAMIADAEKKKLIIPGKTTLIEPTSGNMGISLAFMAAMKGYRIIMTMPSYTSLERRVTMRSFGAELVLTDPAKGMGGTVKKAYDLLDSTPDAFMCQQFANPANTQIHFDTTGPEIWEDTLGNVDIFVMGIGSGGTVSGVGRYLKSKNPNVKIYGVEPAESNILNGGKPGPHAITGNGVGFKPEILDMDVMESVLEVSSEDAIKMARELALKEGLMVGISSGANTVAAIRLAKMPENKGKLIVTIHASFGERYLSSVLFDELRKEAEEMKPVSVD</sequence>
<dbReference type="EC" id="2.5.1.47" evidence="3 4"/>
<dbReference type="EC" id="4.4.1.9" evidence="3 4"/>
<dbReference type="EMBL" id="AB024282">
    <property type="protein sequence ID" value="BAA78560.1"/>
    <property type="molecule type" value="mRNA"/>
</dbReference>
<dbReference type="EMBL" id="AJ010505">
    <property type="protein sequence ID" value="CAB54830.1"/>
    <property type="molecule type" value="mRNA"/>
</dbReference>
<dbReference type="EMBL" id="AL132962">
    <property type="protein sequence ID" value="CAB71074.1"/>
    <property type="molecule type" value="Genomic_DNA"/>
</dbReference>
<dbReference type="EMBL" id="CP002686">
    <property type="protein sequence ID" value="AEE80203.1"/>
    <property type="molecule type" value="Genomic_DNA"/>
</dbReference>
<dbReference type="EMBL" id="CP002686">
    <property type="protein sequence ID" value="AEE80204.1"/>
    <property type="molecule type" value="Genomic_DNA"/>
</dbReference>
<dbReference type="EMBL" id="CP002686">
    <property type="protein sequence ID" value="AEE80205.1"/>
    <property type="molecule type" value="Genomic_DNA"/>
</dbReference>
<dbReference type="EMBL" id="AY093094">
    <property type="protein sequence ID" value="AAM13093.1"/>
    <property type="molecule type" value="mRNA"/>
</dbReference>
<dbReference type="EMBL" id="AY128782">
    <property type="protein sequence ID" value="AAM91182.1"/>
    <property type="molecule type" value="mRNA"/>
</dbReference>
<dbReference type="EMBL" id="AK226606">
    <property type="protein sequence ID" value="BAE98719.1"/>
    <property type="molecule type" value="mRNA"/>
</dbReference>
<dbReference type="EMBL" id="AY087208">
    <property type="protein sequence ID" value="AAM64764.1"/>
    <property type="molecule type" value="mRNA"/>
</dbReference>
<dbReference type="PIR" id="T47936">
    <property type="entry name" value="T47936"/>
</dbReference>
<dbReference type="RefSeq" id="NP_001078324.1">
    <molecule id="Q9S757-2"/>
    <property type="nucleotide sequence ID" value="NM_001084855.2"/>
</dbReference>
<dbReference type="RefSeq" id="NP_001190152.1">
    <molecule id="Q9S757-3"/>
    <property type="nucleotide sequence ID" value="NM_001203223.1"/>
</dbReference>
<dbReference type="RefSeq" id="NP_191703.1">
    <molecule id="Q9S757-1"/>
    <property type="nucleotide sequence ID" value="NM_116009.4"/>
</dbReference>
<dbReference type="SMR" id="Q9S757"/>
<dbReference type="BioGRID" id="10631">
    <property type="interactions" value="1"/>
</dbReference>
<dbReference type="FunCoup" id="Q9S757">
    <property type="interactions" value="1577"/>
</dbReference>
<dbReference type="IntAct" id="Q9S757">
    <property type="interactions" value="1"/>
</dbReference>
<dbReference type="STRING" id="3702.Q9S757"/>
<dbReference type="GlyGen" id="Q9S757">
    <property type="glycosylation" value="1 site"/>
</dbReference>
<dbReference type="iPTMnet" id="Q9S757"/>
<dbReference type="MetOSite" id="Q9S757"/>
<dbReference type="PaxDb" id="3702-AT3G61440.1"/>
<dbReference type="ProteomicsDB" id="222750">
    <molecule id="Q9S757-1"/>
</dbReference>
<dbReference type="EnsemblPlants" id="AT3G61440.1">
    <molecule id="Q9S757-1"/>
    <property type="protein sequence ID" value="AT3G61440.1"/>
    <property type="gene ID" value="AT3G61440"/>
</dbReference>
<dbReference type="EnsemblPlants" id="AT3G61440.2">
    <molecule id="Q9S757-2"/>
    <property type="protein sequence ID" value="AT3G61440.2"/>
    <property type="gene ID" value="AT3G61440"/>
</dbReference>
<dbReference type="EnsemblPlants" id="AT3G61440.3">
    <molecule id="Q9S757-3"/>
    <property type="protein sequence ID" value="AT3G61440.3"/>
    <property type="gene ID" value="AT3G61440"/>
</dbReference>
<dbReference type="GeneID" id="825317"/>
<dbReference type="Gramene" id="AT3G61440.1">
    <molecule id="Q9S757-1"/>
    <property type="protein sequence ID" value="AT3G61440.1"/>
    <property type="gene ID" value="AT3G61440"/>
</dbReference>
<dbReference type="Gramene" id="AT3G61440.2">
    <molecule id="Q9S757-2"/>
    <property type="protein sequence ID" value="AT3G61440.2"/>
    <property type="gene ID" value="AT3G61440"/>
</dbReference>
<dbReference type="Gramene" id="AT3G61440.3">
    <molecule id="Q9S757-3"/>
    <property type="protein sequence ID" value="AT3G61440.3"/>
    <property type="gene ID" value="AT3G61440"/>
</dbReference>
<dbReference type="KEGG" id="ath:AT3G61440"/>
<dbReference type="Araport" id="AT3G61440"/>
<dbReference type="TAIR" id="AT3G61440">
    <property type="gene designation" value="CYSC1"/>
</dbReference>
<dbReference type="eggNOG" id="KOG1252">
    <property type="taxonomic scope" value="Eukaryota"/>
</dbReference>
<dbReference type="InParanoid" id="Q9S757"/>
<dbReference type="OMA" id="MVETFSV"/>
<dbReference type="PhylomeDB" id="Q9S757"/>
<dbReference type="BioCyc" id="ARA:AT3G61440-MONOMER"/>
<dbReference type="BRENDA" id="4.4.1.9">
    <property type="organism ID" value="399"/>
</dbReference>
<dbReference type="SABIO-RK" id="Q9S757"/>
<dbReference type="CD-CODE" id="4299E36E">
    <property type="entry name" value="Nucleolus"/>
</dbReference>
<dbReference type="PRO" id="PR:Q9S757"/>
<dbReference type="Proteomes" id="UP000006548">
    <property type="component" value="Chromosome 3"/>
</dbReference>
<dbReference type="ExpressionAtlas" id="Q9S757">
    <property type="expression patterns" value="baseline and differential"/>
</dbReference>
<dbReference type="GO" id="GO:0009507">
    <property type="term" value="C:chloroplast"/>
    <property type="evidence" value="ECO:0007005"/>
    <property type="project" value="TAIR"/>
</dbReference>
<dbReference type="GO" id="GO:0005829">
    <property type="term" value="C:cytosol"/>
    <property type="evidence" value="ECO:0007005"/>
    <property type="project" value="TAIR"/>
</dbReference>
<dbReference type="GO" id="GO:0005739">
    <property type="term" value="C:mitochondrion"/>
    <property type="evidence" value="ECO:0000314"/>
    <property type="project" value="TAIR"/>
</dbReference>
<dbReference type="GO" id="GO:0005507">
    <property type="term" value="F:copper ion binding"/>
    <property type="evidence" value="ECO:0007005"/>
    <property type="project" value="TAIR"/>
</dbReference>
<dbReference type="GO" id="GO:0004124">
    <property type="term" value="F:cysteine synthase activity"/>
    <property type="evidence" value="ECO:0000314"/>
    <property type="project" value="TAIR"/>
</dbReference>
<dbReference type="GO" id="GO:0050017">
    <property type="term" value="F:L-3-cyanoalanine synthase activity"/>
    <property type="evidence" value="ECO:0000314"/>
    <property type="project" value="TAIR"/>
</dbReference>
<dbReference type="GO" id="GO:0019500">
    <property type="term" value="P:cyanide catabolic process"/>
    <property type="evidence" value="ECO:0000315"/>
    <property type="project" value="TAIR"/>
</dbReference>
<dbReference type="GO" id="GO:0019499">
    <property type="term" value="P:cyanide metabolic process"/>
    <property type="evidence" value="ECO:0000304"/>
    <property type="project" value="TAIR"/>
</dbReference>
<dbReference type="GO" id="GO:0019344">
    <property type="term" value="P:cysteine biosynthetic process"/>
    <property type="evidence" value="ECO:0000314"/>
    <property type="project" value="TAIR"/>
</dbReference>
<dbReference type="GO" id="GO:0006535">
    <property type="term" value="P:cysteine biosynthetic process from serine"/>
    <property type="evidence" value="ECO:0007669"/>
    <property type="project" value="InterPro"/>
</dbReference>
<dbReference type="GO" id="GO:0051410">
    <property type="term" value="P:detoxification of nitrogen compound"/>
    <property type="evidence" value="ECO:0000304"/>
    <property type="project" value="TAIR"/>
</dbReference>
<dbReference type="GO" id="GO:0006955">
    <property type="term" value="P:immune response"/>
    <property type="evidence" value="ECO:0000315"/>
    <property type="project" value="TAIR"/>
</dbReference>
<dbReference type="GO" id="GO:0080147">
    <property type="term" value="P:root hair cell development"/>
    <property type="evidence" value="ECO:0000315"/>
    <property type="project" value="TAIR"/>
</dbReference>
<dbReference type="CDD" id="cd01561">
    <property type="entry name" value="CBS_like"/>
    <property type="match status" value="1"/>
</dbReference>
<dbReference type="FunFam" id="3.40.50.1100:FF:000002">
    <property type="entry name" value="Cysteine synthase"/>
    <property type="match status" value="1"/>
</dbReference>
<dbReference type="FunFam" id="3.40.50.1100:FF:000006">
    <property type="entry name" value="Cysteine synthase"/>
    <property type="match status" value="1"/>
</dbReference>
<dbReference type="Gene3D" id="3.40.50.1100">
    <property type="match status" value="2"/>
</dbReference>
<dbReference type="InterPro" id="IPR005856">
    <property type="entry name" value="Cys_synth"/>
</dbReference>
<dbReference type="InterPro" id="IPR050214">
    <property type="entry name" value="Cys_Synth/Cystath_Beta-Synth"/>
</dbReference>
<dbReference type="InterPro" id="IPR005859">
    <property type="entry name" value="CysK"/>
</dbReference>
<dbReference type="InterPro" id="IPR001216">
    <property type="entry name" value="P-phosphate_BS"/>
</dbReference>
<dbReference type="InterPro" id="IPR001926">
    <property type="entry name" value="TrpB-like_PALP"/>
</dbReference>
<dbReference type="InterPro" id="IPR036052">
    <property type="entry name" value="TrpB-like_PALP_sf"/>
</dbReference>
<dbReference type="NCBIfam" id="TIGR01139">
    <property type="entry name" value="cysK"/>
    <property type="match status" value="1"/>
</dbReference>
<dbReference type="NCBIfam" id="TIGR01136">
    <property type="entry name" value="cysKM"/>
    <property type="match status" value="1"/>
</dbReference>
<dbReference type="PANTHER" id="PTHR10314">
    <property type="entry name" value="CYSTATHIONINE BETA-SYNTHASE"/>
    <property type="match status" value="1"/>
</dbReference>
<dbReference type="Pfam" id="PF00291">
    <property type="entry name" value="PALP"/>
    <property type="match status" value="1"/>
</dbReference>
<dbReference type="SUPFAM" id="SSF53686">
    <property type="entry name" value="Tryptophan synthase beta subunit-like PLP-dependent enzymes"/>
    <property type="match status" value="1"/>
</dbReference>
<dbReference type="PROSITE" id="PS00901">
    <property type="entry name" value="CYS_SYNTHASE"/>
    <property type="match status" value="1"/>
</dbReference>
<proteinExistence type="evidence at protein level"/>
<organism>
    <name type="scientific">Arabidopsis thaliana</name>
    <name type="common">Mouse-ear cress</name>
    <dbReference type="NCBI Taxonomy" id="3702"/>
    <lineage>
        <taxon>Eukaryota</taxon>
        <taxon>Viridiplantae</taxon>
        <taxon>Streptophyta</taxon>
        <taxon>Embryophyta</taxon>
        <taxon>Tracheophyta</taxon>
        <taxon>Spermatophyta</taxon>
        <taxon>Magnoliopsida</taxon>
        <taxon>eudicotyledons</taxon>
        <taxon>Gunneridae</taxon>
        <taxon>Pentapetalae</taxon>
        <taxon>rosids</taxon>
        <taxon>malvids</taxon>
        <taxon>Brassicales</taxon>
        <taxon>Brassicaceae</taxon>
        <taxon>Camelineae</taxon>
        <taxon>Arabidopsis</taxon>
    </lineage>
</organism>
<gene>
    <name type="primary">CYSC1</name>
    <name type="synonym">OAS5</name>
    <name type="ordered locus">At3g61440</name>
    <name type="ORF">F2A19.40</name>
</gene>